<proteinExistence type="inferred from homology"/>
<sequence length="155" mass="17277">MSEQNNTEMTFQIQRIYTKDISFEAPNAPHVFQKDWQPEVKLDLDTASSQLADDVYEVVLRVTVTASLGEETAFLCEVQQGGIFSIAGIEGTQMAHCLGAYCPNILFPYARECITSMVSRGTFPQLNLAPVNFDALFMNYLQQQAGEGTEEHQDA</sequence>
<keyword id="KW-0143">Chaperone</keyword>
<keyword id="KW-0963">Cytoplasm</keyword>
<keyword id="KW-0653">Protein transport</keyword>
<keyword id="KW-0811">Translocation</keyword>
<keyword id="KW-0813">Transport</keyword>
<gene>
    <name evidence="1" type="primary">secB</name>
    <name type="ordered locus">EcHS_A3821</name>
</gene>
<protein>
    <recommendedName>
        <fullName evidence="1">Protein-export protein SecB</fullName>
    </recommendedName>
</protein>
<name>SECB_ECOHS</name>
<comment type="function">
    <text evidence="1">One of the proteins required for the normal export of preproteins out of the cell cytoplasm. It is a molecular chaperone that binds to a subset of precursor proteins, maintaining them in a translocation-competent state. It also specifically binds to its receptor SecA.</text>
</comment>
<comment type="subunit">
    <text evidence="1">Homotetramer, a dimer of dimers. One homotetramer interacts with 1 SecA dimer.</text>
</comment>
<comment type="subcellular location">
    <subcellularLocation>
        <location evidence="1">Cytoplasm</location>
    </subcellularLocation>
</comment>
<comment type="similarity">
    <text evidence="1">Belongs to the SecB family.</text>
</comment>
<evidence type="ECO:0000255" key="1">
    <source>
        <dbReference type="HAMAP-Rule" id="MF_00821"/>
    </source>
</evidence>
<organism>
    <name type="scientific">Escherichia coli O9:H4 (strain HS)</name>
    <dbReference type="NCBI Taxonomy" id="331112"/>
    <lineage>
        <taxon>Bacteria</taxon>
        <taxon>Pseudomonadati</taxon>
        <taxon>Pseudomonadota</taxon>
        <taxon>Gammaproteobacteria</taxon>
        <taxon>Enterobacterales</taxon>
        <taxon>Enterobacteriaceae</taxon>
        <taxon>Escherichia</taxon>
    </lineage>
</organism>
<reference key="1">
    <citation type="journal article" date="2008" name="J. Bacteriol.">
        <title>The pangenome structure of Escherichia coli: comparative genomic analysis of E. coli commensal and pathogenic isolates.</title>
        <authorList>
            <person name="Rasko D.A."/>
            <person name="Rosovitz M.J."/>
            <person name="Myers G.S.A."/>
            <person name="Mongodin E.F."/>
            <person name="Fricke W.F."/>
            <person name="Gajer P."/>
            <person name="Crabtree J."/>
            <person name="Sebaihia M."/>
            <person name="Thomson N.R."/>
            <person name="Chaudhuri R."/>
            <person name="Henderson I.R."/>
            <person name="Sperandio V."/>
            <person name="Ravel J."/>
        </authorList>
    </citation>
    <scope>NUCLEOTIDE SEQUENCE [LARGE SCALE GENOMIC DNA]</scope>
    <source>
        <strain>HS</strain>
    </source>
</reference>
<accession>A8A674</accession>
<dbReference type="EMBL" id="CP000802">
    <property type="protein sequence ID" value="ABV08028.1"/>
    <property type="molecule type" value="Genomic_DNA"/>
</dbReference>
<dbReference type="RefSeq" id="WP_000003377.1">
    <property type="nucleotide sequence ID" value="NC_009800.1"/>
</dbReference>
<dbReference type="SMR" id="A8A674"/>
<dbReference type="GeneID" id="86944403"/>
<dbReference type="KEGG" id="ecx:EcHS_A3821"/>
<dbReference type="HOGENOM" id="CLU_111574_1_0_6"/>
<dbReference type="GO" id="GO:0005737">
    <property type="term" value="C:cytoplasm"/>
    <property type="evidence" value="ECO:0007669"/>
    <property type="project" value="UniProtKB-SubCell"/>
</dbReference>
<dbReference type="GO" id="GO:0051082">
    <property type="term" value="F:unfolded protein binding"/>
    <property type="evidence" value="ECO:0007669"/>
    <property type="project" value="InterPro"/>
</dbReference>
<dbReference type="GO" id="GO:0006457">
    <property type="term" value="P:protein folding"/>
    <property type="evidence" value="ECO:0007669"/>
    <property type="project" value="UniProtKB-UniRule"/>
</dbReference>
<dbReference type="GO" id="GO:0051262">
    <property type="term" value="P:protein tetramerization"/>
    <property type="evidence" value="ECO:0007669"/>
    <property type="project" value="InterPro"/>
</dbReference>
<dbReference type="GO" id="GO:0015031">
    <property type="term" value="P:protein transport"/>
    <property type="evidence" value="ECO:0007669"/>
    <property type="project" value="UniProtKB-UniRule"/>
</dbReference>
<dbReference type="CDD" id="cd00557">
    <property type="entry name" value="Translocase_SecB"/>
    <property type="match status" value="1"/>
</dbReference>
<dbReference type="FunFam" id="3.10.420.10:FF:000001">
    <property type="entry name" value="Protein-export chaperone SecB"/>
    <property type="match status" value="1"/>
</dbReference>
<dbReference type="Gene3D" id="3.10.420.10">
    <property type="entry name" value="SecB-like"/>
    <property type="match status" value="1"/>
</dbReference>
<dbReference type="HAMAP" id="MF_00821">
    <property type="entry name" value="SecB"/>
    <property type="match status" value="1"/>
</dbReference>
<dbReference type="InterPro" id="IPR003708">
    <property type="entry name" value="SecB"/>
</dbReference>
<dbReference type="InterPro" id="IPR035958">
    <property type="entry name" value="SecB-like_sf"/>
</dbReference>
<dbReference type="NCBIfam" id="NF004390">
    <property type="entry name" value="PRK05751.1-1"/>
    <property type="match status" value="1"/>
</dbReference>
<dbReference type="NCBIfam" id="NF004393">
    <property type="entry name" value="PRK05751.1-4"/>
    <property type="match status" value="1"/>
</dbReference>
<dbReference type="NCBIfam" id="TIGR00809">
    <property type="entry name" value="secB"/>
    <property type="match status" value="1"/>
</dbReference>
<dbReference type="PANTHER" id="PTHR36918">
    <property type="match status" value="1"/>
</dbReference>
<dbReference type="PANTHER" id="PTHR36918:SF1">
    <property type="entry name" value="PROTEIN-EXPORT PROTEIN SECB"/>
    <property type="match status" value="1"/>
</dbReference>
<dbReference type="Pfam" id="PF02556">
    <property type="entry name" value="SecB"/>
    <property type="match status" value="1"/>
</dbReference>
<dbReference type="PRINTS" id="PR01594">
    <property type="entry name" value="SECBCHAPRONE"/>
</dbReference>
<dbReference type="SUPFAM" id="SSF54611">
    <property type="entry name" value="SecB-like"/>
    <property type="match status" value="1"/>
</dbReference>
<feature type="chain" id="PRO_1000062472" description="Protein-export protein SecB">
    <location>
        <begin position="1"/>
        <end position="155"/>
    </location>
</feature>